<accession>P55666</accession>
<gene>
    <name type="ordered locus">NGR_a01470</name>
    <name type="ORF">y4tL</name>
</gene>
<sequence length="390" mass="42774">MPVIKGPQVFPRAEFLRRLNAVKLEMGRLEIDALIVGSSADITYLTGYTAKSGYVPQALVISSNDEEPTFILRRQDAPAAIHQTFMDRDKVIGYSEALIGNPDKDGYDAVVDFLNERDGANKRGVGVQLGYLSVRSAEKFKTRLPSARIVDCTHSVAWIRMIKSDLEISMMRDAAAIADAGVQKAFEVIRPGVREADVMADVAAQLARGTNGKAGTDLASMYFCSSPRTGTCHIRWSEDVIRDGSQINLEIAGVRHGYVSAIMRTFSVGAPSDRLRRIHDAEVLGLEAALSTVKPGATCSDVANAFYRTIEKSGFQKDSRCGYAIGIDWSEPTASLKDGDMTKLKPNMTFHLMLGNWIEEDFGYVLSETFRVTEAGCEVLTKSPRQLCVI</sequence>
<feature type="chain" id="PRO_0000185106" description="Uncharacterized hydrolase/peptidase y4tL">
    <location>
        <begin position="1"/>
        <end position="390"/>
    </location>
</feature>
<geneLocation type="plasmid">
    <name>sym pNGR234a</name>
</geneLocation>
<evidence type="ECO:0000305" key="1"/>
<reference key="1">
    <citation type="journal article" date="1997" name="Nature">
        <title>Molecular basis of symbiosis between Rhizobium and legumes.</title>
        <authorList>
            <person name="Freiberg C.A."/>
            <person name="Fellay R."/>
            <person name="Bairoch A."/>
            <person name="Broughton W.J."/>
            <person name="Rosenthal A."/>
            <person name="Perret X."/>
        </authorList>
    </citation>
    <scope>NUCLEOTIDE SEQUENCE [LARGE SCALE GENOMIC DNA]</scope>
    <source>
        <strain>NBRC 101917 / NGR234</strain>
    </source>
</reference>
<reference key="2">
    <citation type="journal article" date="2009" name="Appl. Environ. Microbiol.">
        <title>Rhizobium sp. strain NGR234 possesses a remarkable number of secretion systems.</title>
        <authorList>
            <person name="Schmeisser C."/>
            <person name="Liesegang H."/>
            <person name="Krysciak D."/>
            <person name="Bakkou N."/>
            <person name="Le Quere A."/>
            <person name="Wollherr A."/>
            <person name="Heinemeyer I."/>
            <person name="Morgenstern B."/>
            <person name="Pommerening-Roeser A."/>
            <person name="Flores M."/>
            <person name="Palacios R."/>
            <person name="Brenner S."/>
            <person name="Gottschalk G."/>
            <person name="Schmitz R.A."/>
            <person name="Broughton W.J."/>
            <person name="Perret X."/>
            <person name="Strittmatter A.W."/>
            <person name="Streit W.R."/>
        </authorList>
    </citation>
    <scope>NUCLEOTIDE SEQUENCE [LARGE SCALE GENOMIC DNA]</scope>
    <source>
        <strain>NBRC 101917 / NGR234</strain>
    </source>
</reference>
<proteinExistence type="inferred from homology"/>
<name>Y4TL_SINFN</name>
<comment type="similarity">
    <text evidence="1">Belongs to the peptidase M24 family.</text>
</comment>
<protein>
    <recommendedName>
        <fullName>Uncharacterized hydrolase/peptidase y4tL</fullName>
        <ecNumber>3.-.-.-</ecNumber>
    </recommendedName>
</protein>
<keyword id="KW-0378">Hydrolase</keyword>
<keyword id="KW-0614">Plasmid</keyword>
<keyword id="KW-1185">Reference proteome</keyword>
<dbReference type="EC" id="3.-.-.-"/>
<dbReference type="EMBL" id="U00090">
    <property type="protein sequence ID" value="AAB91865.1"/>
    <property type="molecule type" value="Genomic_DNA"/>
</dbReference>
<dbReference type="RefSeq" id="NP_444078.1">
    <property type="nucleotide sequence ID" value="NC_000914.2"/>
</dbReference>
<dbReference type="RefSeq" id="WP_010875185.1">
    <property type="nucleotide sequence ID" value="NC_000914.2"/>
</dbReference>
<dbReference type="SMR" id="P55666"/>
<dbReference type="KEGG" id="rhi:NGR_a01470"/>
<dbReference type="PATRIC" id="fig|394.7.peg.132"/>
<dbReference type="eggNOG" id="COG0006">
    <property type="taxonomic scope" value="Bacteria"/>
</dbReference>
<dbReference type="HOGENOM" id="CLU_017266_3_1_5"/>
<dbReference type="OrthoDB" id="9761809at2"/>
<dbReference type="Proteomes" id="UP000001054">
    <property type="component" value="Plasmid pNGR234a"/>
</dbReference>
<dbReference type="GO" id="GO:0016787">
    <property type="term" value="F:hydrolase activity"/>
    <property type="evidence" value="ECO:0007669"/>
    <property type="project" value="UniProtKB-KW"/>
</dbReference>
<dbReference type="CDD" id="cd01066">
    <property type="entry name" value="APP_MetAP"/>
    <property type="match status" value="1"/>
</dbReference>
<dbReference type="Gene3D" id="3.90.230.10">
    <property type="entry name" value="Creatinase/methionine aminopeptidase superfamily"/>
    <property type="match status" value="1"/>
</dbReference>
<dbReference type="Gene3D" id="3.40.350.10">
    <property type="entry name" value="Creatinase/prolidase N-terminal domain"/>
    <property type="match status" value="1"/>
</dbReference>
<dbReference type="InterPro" id="IPR029149">
    <property type="entry name" value="Creatin/AminoP/Spt16_N"/>
</dbReference>
<dbReference type="InterPro" id="IPR036005">
    <property type="entry name" value="Creatinase/aminopeptidase-like"/>
</dbReference>
<dbReference type="InterPro" id="IPR000587">
    <property type="entry name" value="Creatinase_N"/>
</dbReference>
<dbReference type="InterPro" id="IPR000994">
    <property type="entry name" value="Pept_M24"/>
</dbReference>
<dbReference type="InterPro" id="IPR050659">
    <property type="entry name" value="Peptidase_M24B"/>
</dbReference>
<dbReference type="PANTHER" id="PTHR46112">
    <property type="entry name" value="AMINOPEPTIDASE"/>
    <property type="match status" value="1"/>
</dbReference>
<dbReference type="PANTHER" id="PTHR46112:SF2">
    <property type="entry name" value="XAA-PRO AMINOPEPTIDASE P-RELATED"/>
    <property type="match status" value="1"/>
</dbReference>
<dbReference type="Pfam" id="PF01321">
    <property type="entry name" value="Creatinase_N"/>
    <property type="match status" value="1"/>
</dbReference>
<dbReference type="Pfam" id="PF00557">
    <property type="entry name" value="Peptidase_M24"/>
    <property type="match status" value="1"/>
</dbReference>
<dbReference type="SUPFAM" id="SSF55920">
    <property type="entry name" value="Creatinase/aminopeptidase"/>
    <property type="match status" value="1"/>
</dbReference>
<dbReference type="SUPFAM" id="SSF53092">
    <property type="entry name" value="Creatinase/prolidase N-terminal domain"/>
    <property type="match status" value="1"/>
</dbReference>
<organism>
    <name type="scientific">Sinorhizobium fredii (strain NBRC 101917 / NGR234)</name>
    <dbReference type="NCBI Taxonomy" id="394"/>
    <lineage>
        <taxon>Bacteria</taxon>
        <taxon>Pseudomonadati</taxon>
        <taxon>Pseudomonadota</taxon>
        <taxon>Alphaproteobacteria</taxon>
        <taxon>Hyphomicrobiales</taxon>
        <taxon>Rhizobiaceae</taxon>
        <taxon>Sinorhizobium/Ensifer group</taxon>
        <taxon>Sinorhizobium</taxon>
    </lineage>
</organism>